<proteinExistence type="inferred from homology"/>
<reference key="1">
    <citation type="journal article" date="2005" name="Infect. Immun.">
        <title>Whole-genome analyses of speciation events in pathogenic Brucellae.</title>
        <authorList>
            <person name="Chain P.S."/>
            <person name="Comerci D.J."/>
            <person name="Tolmasky M.E."/>
            <person name="Larimer F.W."/>
            <person name="Malfatti S.A."/>
            <person name="Vergez L.M."/>
            <person name="Aguero F."/>
            <person name="Land M.L."/>
            <person name="Ugalde R.A."/>
            <person name="Garcia E."/>
        </authorList>
    </citation>
    <scope>NUCLEOTIDE SEQUENCE [LARGE SCALE GENOMIC DNA]</scope>
    <source>
        <strain>2308</strain>
    </source>
</reference>
<comment type="function">
    <text evidence="2">Component of an amino-acid transport system.</text>
</comment>
<comment type="similarity">
    <text evidence="2">Belongs to the leucine-binding protein family.</text>
</comment>
<protein>
    <recommendedName>
        <fullName>Leu/Ile/Val-binding protein homolog 7</fullName>
    </recommendedName>
</protein>
<feature type="signal peptide" evidence="1">
    <location>
        <begin position="1"/>
        <end position="22"/>
    </location>
</feature>
<feature type="chain" id="PRO_0000285742" description="Leu/Ile/Val-binding protein homolog 7">
    <location>
        <begin position="23"/>
        <end position="399"/>
    </location>
</feature>
<name>LIVB7_BRUA2</name>
<dbReference type="EMBL" id="AM040265">
    <property type="protein sequence ID" value="CAJ12988.1"/>
    <property type="molecule type" value="Genomic_DNA"/>
</dbReference>
<dbReference type="RefSeq" id="WP_002967329.1">
    <property type="nucleotide sequence ID" value="NZ_KN046823.1"/>
</dbReference>
<dbReference type="SMR" id="Q2YK58"/>
<dbReference type="STRING" id="359391.BAB2_0822"/>
<dbReference type="KEGG" id="bmf:BAB2_0822"/>
<dbReference type="PATRIC" id="fig|359391.11.peg.513"/>
<dbReference type="HOGENOM" id="CLU_027128_4_0_5"/>
<dbReference type="PhylomeDB" id="Q2YK58"/>
<dbReference type="PHI-base" id="PHI:9128"/>
<dbReference type="Proteomes" id="UP000002719">
    <property type="component" value="Chromosome II"/>
</dbReference>
<dbReference type="GO" id="GO:0006865">
    <property type="term" value="P:amino acid transport"/>
    <property type="evidence" value="ECO:0007669"/>
    <property type="project" value="UniProtKB-KW"/>
</dbReference>
<dbReference type="CDD" id="cd06340">
    <property type="entry name" value="PBP1_ABC_ligand_binding-like"/>
    <property type="match status" value="1"/>
</dbReference>
<dbReference type="Gene3D" id="3.40.50.2300">
    <property type="match status" value="2"/>
</dbReference>
<dbReference type="InterPro" id="IPR051010">
    <property type="entry name" value="BCAA_transport"/>
</dbReference>
<dbReference type="InterPro" id="IPR028081">
    <property type="entry name" value="Leu-bd"/>
</dbReference>
<dbReference type="InterPro" id="IPR000709">
    <property type="entry name" value="Leu_Ile_Val-bd"/>
</dbReference>
<dbReference type="InterPro" id="IPR028082">
    <property type="entry name" value="Peripla_BP_I"/>
</dbReference>
<dbReference type="PANTHER" id="PTHR30483:SF37">
    <property type="entry name" value="ABC TRANSPORTER SUBSTRATE-BINDING PROTEIN"/>
    <property type="match status" value="1"/>
</dbReference>
<dbReference type="PANTHER" id="PTHR30483">
    <property type="entry name" value="LEUCINE-SPECIFIC-BINDING PROTEIN"/>
    <property type="match status" value="1"/>
</dbReference>
<dbReference type="Pfam" id="PF13458">
    <property type="entry name" value="Peripla_BP_6"/>
    <property type="match status" value="1"/>
</dbReference>
<dbReference type="PRINTS" id="PR00337">
    <property type="entry name" value="LEUILEVALBP"/>
</dbReference>
<dbReference type="SUPFAM" id="SSF53822">
    <property type="entry name" value="Periplasmic binding protein-like I"/>
    <property type="match status" value="1"/>
</dbReference>
<keyword id="KW-0029">Amino-acid transport</keyword>
<keyword id="KW-1185">Reference proteome</keyword>
<keyword id="KW-0732">Signal</keyword>
<keyword id="KW-0813">Transport</keyword>
<organism>
    <name type="scientific">Brucella abortus (strain 2308)</name>
    <dbReference type="NCBI Taxonomy" id="359391"/>
    <lineage>
        <taxon>Bacteria</taxon>
        <taxon>Pseudomonadati</taxon>
        <taxon>Pseudomonadota</taxon>
        <taxon>Alphaproteobacteria</taxon>
        <taxon>Hyphomicrobiales</taxon>
        <taxon>Brucellaceae</taxon>
        <taxon>Brucella/Ochrobactrum group</taxon>
        <taxon>Brucella</taxon>
    </lineage>
</organism>
<sequence>MEKHLIALSVAALQAGAAPASADIKMGSLYPFSGPLALLGDESARGLEIAVEEINAKGGVQGEKIVLVRGDAVDNNQAIGEARRLISVENVAGIFGSFSSGRAVAASQVSELAGVPYFELGAVADEITDRGLENVYRANPYARDFAQMIVEMLQKKIAPKLGRDSKDLKIAVIYEDSSYGTSVAKHEETFLKEAGLNMVLSQSYPGNTVDMSSLVLDLKSAGADVVLQTSYQSDSVLFLQQANEGGYKPSAIVGAGGGYSLQPTADAVGHDVIEAAYDVDFTQFAVNTSFTPGLEEFVEAYKKKYGETPRSGYSLTNYVGAKVILEALNKVKGFDAAAVKQALSAVDIEAGKTAMGYGFKFDQNNQNERASMMGMQWQDGKLVTVYPDAAAISEIRLPQ</sequence>
<gene>
    <name type="ordered locus">BAB2_0822</name>
</gene>
<accession>Q2YK58</accession>
<evidence type="ECO:0000255" key="1"/>
<evidence type="ECO:0000305" key="2"/>